<keyword id="KW-0028">Amino-acid biosynthesis</keyword>
<keyword id="KW-0963">Cytoplasm</keyword>
<keyword id="KW-0368">Histidine biosynthesis</keyword>
<keyword id="KW-0456">Lyase</keyword>
<keyword id="KW-1185">Reference proteome</keyword>
<protein>
    <recommendedName>
        <fullName evidence="1">Imidazole glycerol phosphate synthase subunit HisF</fullName>
        <ecNumber evidence="1">4.3.2.10</ecNumber>
    </recommendedName>
    <alternativeName>
        <fullName evidence="1">IGP synthase cyclase subunit</fullName>
    </alternativeName>
    <alternativeName>
        <fullName evidence="1">IGP synthase subunit HisF</fullName>
    </alternativeName>
    <alternativeName>
        <fullName evidence="1">ImGP synthase subunit HisF</fullName>
        <shortName evidence="1">IGPS subunit HisF</shortName>
    </alternativeName>
</protein>
<gene>
    <name evidence="1" type="primary">hisF</name>
    <name type="ordered locus">HRM2_35730</name>
</gene>
<feature type="chain" id="PRO_1000213206" description="Imidazole glycerol phosphate synthase subunit HisF">
    <location>
        <begin position="1"/>
        <end position="259"/>
    </location>
</feature>
<feature type="active site" evidence="1">
    <location>
        <position position="11"/>
    </location>
</feature>
<feature type="active site" evidence="1">
    <location>
        <position position="130"/>
    </location>
</feature>
<evidence type="ECO:0000255" key="1">
    <source>
        <dbReference type="HAMAP-Rule" id="MF_01013"/>
    </source>
</evidence>
<name>HIS6_DESAH</name>
<sequence length="259" mass="27575">MLSKRIIPCLDVRAGKTTKGIKFQNNVEIGDPVEMAKFYYEAGADELVFYDITASHEQRGIMIDVVKKVAETIFIPFSVGGGISTLEGMRAVLLAGAEKVSVNSAAVKNPDIIRQGSRAFGNQCVVLGMDVKHVGEKPGIASGYEIVINGGRSYTGMDAIAWALKAQDLGAGEICLNSIDADGTKDGYEINLTRLVSDAVDIPVIASGGAGTPAHLAHVLDQGRADAALIASMVHFGTYTVNQIKGYLHDHGVKVRKTW</sequence>
<comment type="function">
    <text evidence="1">IGPS catalyzes the conversion of PRFAR and glutamine to IGP, AICAR and glutamate. The HisF subunit catalyzes the cyclization activity that produces IGP and AICAR from PRFAR using the ammonia provided by the HisH subunit.</text>
</comment>
<comment type="catalytic activity">
    <reaction evidence="1">
        <text>5-[(5-phospho-1-deoxy-D-ribulos-1-ylimino)methylamino]-1-(5-phospho-beta-D-ribosyl)imidazole-4-carboxamide + L-glutamine = D-erythro-1-(imidazol-4-yl)glycerol 3-phosphate + 5-amino-1-(5-phospho-beta-D-ribosyl)imidazole-4-carboxamide + L-glutamate + H(+)</text>
        <dbReference type="Rhea" id="RHEA:24793"/>
        <dbReference type="ChEBI" id="CHEBI:15378"/>
        <dbReference type="ChEBI" id="CHEBI:29985"/>
        <dbReference type="ChEBI" id="CHEBI:58278"/>
        <dbReference type="ChEBI" id="CHEBI:58359"/>
        <dbReference type="ChEBI" id="CHEBI:58475"/>
        <dbReference type="ChEBI" id="CHEBI:58525"/>
        <dbReference type="EC" id="4.3.2.10"/>
    </reaction>
</comment>
<comment type="pathway">
    <text evidence="1">Amino-acid biosynthesis; L-histidine biosynthesis; L-histidine from 5-phospho-alpha-D-ribose 1-diphosphate: step 5/9.</text>
</comment>
<comment type="subunit">
    <text evidence="1">Heterodimer of HisH and HisF.</text>
</comment>
<comment type="subcellular location">
    <subcellularLocation>
        <location evidence="1">Cytoplasm</location>
    </subcellularLocation>
</comment>
<comment type="similarity">
    <text evidence="1">Belongs to the HisA/HisF family.</text>
</comment>
<organism>
    <name type="scientific">Desulforapulum autotrophicum (strain ATCC 43914 / DSM 3382 / VKM B-1955 / HRM2)</name>
    <name type="common">Desulfobacterium autotrophicum</name>
    <dbReference type="NCBI Taxonomy" id="177437"/>
    <lineage>
        <taxon>Bacteria</taxon>
        <taxon>Pseudomonadati</taxon>
        <taxon>Thermodesulfobacteriota</taxon>
        <taxon>Desulfobacteria</taxon>
        <taxon>Desulfobacterales</taxon>
        <taxon>Desulfobacteraceae</taxon>
        <taxon>Desulforapulum</taxon>
    </lineage>
</organism>
<proteinExistence type="inferred from homology"/>
<reference key="1">
    <citation type="journal article" date="2009" name="Environ. Microbiol.">
        <title>Genome sequence of Desulfobacterium autotrophicum HRM2, a marine sulfate reducer oxidizing organic carbon completely to carbon dioxide.</title>
        <authorList>
            <person name="Strittmatter A.W."/>
            <person name="Liesegang H."/>
            <person name="Rabus R."/>
            <person name="Decker I."/>
            <person name="Amann J."/>
            <person name="Andres S."/>
            <person name="Henne A."/>
            <person name="Fricke W.F."/>
            <person name="Martinez-Arias R."/>
            <person name="Bartels D."/>
            <person name="Goesmann A."/>
            <person name="Krause L."/>
            <person name="Puehler A."/>
            <person name="Klenk H.P."/>
            <person name="Richter M."/>
            <person name="Schuler M."/>
            <person name="Gloeckner F.O."/>
            <person name="Meyerdierks A."/>
            <person name="Gottschalk G."/>
            <person name="Amann R."/>
        </authorList>
    </citation>
    <scope>NUCLEOTIDE SEQUENCE [LARGE SCALE GENOMIC DNA]</scope>
    <source>
        <strain>ATCC 43914 / DSM 3382 / VKM B-1955 / HRM2</strain>
    </source>
</reference>
<accession>C0Q9D3</accession>
<dbReference type="EC" id="4.3.2.10" evidence="1"/>
<dbReference type="EMBL" id="CP001087">
    <property type="protein sequence ID" value="ACN16638.1"/>
    <property type="molecule type" value="Genomic_DNA"/>
</dbReference>
<dbReference type="RefSeq" id="WP_015905388.1">
    <property type="nucleotide sequence ID" value="NC_012108.1"/>
</dbReference>
<dbReference type="SMR" id="C0Q9D3"/>
<dbReference type="STRING" id="177437.HRM2_35730"/>
<dbReference type="KEGG" id="dat:HRM2_35730"/>
<dbReference type="eggNOG" id="COG0107">
    <property type="taxonomic scope" value="Bacteria"/>
</dbReference>
<dbReference type="HOGENOM" id="CLU_048577_4_0_7"/>
<dbReference type="OrthoDB" id="9807749at2"/>
<dbReference type="UniPathway" id="UPA00031">
    <property type="reaction ID" value="UER00010"/>
</dbReference>
<dbReference type="Proteomes" id="UP000000442">
    <property type="component" value="Chromosome"/>
</dbReference>
<dbReference type="GO" id="GO:0005737">
    <property type="term" value="C:cytoplasm"/>
    <property type="evidence" value="ECO:0007669"/>
    <property type="project" value="UniProtKB-SubCell"/>
</dbReference>
<dbReference type="GO" id="GO:0000107">
    <property type="term" value="F:imidazoleglycerol-phosphate synthase activity"/>
    <property type="evidence" value="ECO:0007669"/>
    <property type="project" value="UniProtKB-UniRule"/>
</dbReference>
<dbReference type="GO" id="GO:0016829">
    <property type="term" value="F:lyase activity"/>
    <property type="evidence" value="ECO:0007669"/>
    <property type="project" value="UniProtKB-KW"/>
</dbReference>
<dbReference type="GO" id="GO:0000105">
    <property type="term" value="P:L-histidine biosynthetic process"/>
    <property type="evidence" value="ECO:0007669"/>
    <property type="project" value="UniProtKB-UniRule"/>
</dbReference>
<dbReference type="CDD" id="cd04731">
    <property type="entry name" value="HisF"/>
    <property type="match status" value="1"/>
</dbReference>
<dbReference type="FunFam" id="3.20.20.70:FF:000006">
    <property type="entry name" value="Imidazole glycerol phosphate synthase subunit HisF"/>
    <property type="match status" value="1"/>
</dbReference>
<dbReference type="Gene3D" id="3.20.20.70">
    <property type="entry name" value="Aldolase class I"/>
    <property type="match status" value="1"/>
</dbReference>
<dbReference type="HAMAP" id="MF_01013">
    <property type="entry name" value="HisF"/>
    <property type="match status" value="1"/>
</dbReference>
<dbReference type="InterPro" id="IPR013785">
    <property type="entry name" value="Aldolase_TIM"/>
</dbReference>
<dbReference type="InterPro" id="IPR006062">
    <property type="entry name" value="His_biosynth"/>
</dbReference>
<dbReference type="InterPro" id="IPR004651">
    <property type="entry name" value="HisF"/>
</dbReference>
<dbReference type="InterPro" id="IPR050064">
    <property type="entry name" value="IGPS_HisA/HisF"/>
</dbReference>
<dbReference type="InterPro" id="IPR011060">
    <property type="entry name" value="RibuloseP-bd_barrel"/>
</dbReference>
<dbReference type="NCBIfam" id="TIGR00735">
    <property type="entry name" value="hisF"/>
    <property type="match status" value="1"/>
</dbReference>
<dbReference type="PANTHER" id="PTHR21235:SF2">
    <property type="entry name" value="IMIDAZOLE GLYCEROL PHOSPHATE SYNTHASE HISHF"/>
    <property type="match status" value="1"/>
</dbReference>
<dbReference type="PANTHER" id="PTHR21235">
    <property type="entry name" value="IMIDAZOLE GLYCEROL PHOSPHATE SYNTHASE SUBUNIT HISF/H IGP SYNTHASE SUBUNIT HISF/H"/>
    <property type="match status" value="1"/>
</dbReference>
<dbReference type="Pfam" id="PF00977">
    <property type="entry name" value="His_biosynth"/>
    <property type="match status" value="1"/>
</dbReference>
<dbReference type="SUPFAM" id="SSF51366">
    <property type="entry name" value="Ribulose-phoshate binding barrel"/>
    <property type="match status" value="1"/>
</dbReference>